<dbReference type="EC" id="4.2.1.108" evidence="1"/>
<dbReference type="EMBL" id="AM420293">
    <property type="protein sequence ID" value="CAL99834.1"/>
    <property type="molecule type" value="Genomic_DNA"/>
</dbReference>
<dbReference type="RefSeq" id="WP_009947387.1">
    <property type="nucleotide sequence ID" value="NC_009142.1"/>
</dbReference>
<dbReference type="SMR" id="A4F710"/>
<dbReference type="STRING" id="405948.SACE_0485"/>
<dbReference type="KEGG" id="sen:SACE_0485"/>
<dbReference type="eggNOG" id="COG1917">
    <property type="taxonomic scope" value="Bacteria"/>
</dbReference>
<dbReference type="HOGENOM" id="CLU_154525_0_0_11"/>
<dbReference type="OrthoDB" id="4406415at2"/>
<dbReference type="UniPathway" id="UPA00067">
    <property type="reaction ID" value="UER00123"/>
</dbReference>
<dbReference type="Proteomes" id="UP000006728">
    <property type="component" value="Chromosome"/>
</dbReference>
<dbReference type="GO" id="GO:0033990">
    <property type="term" value="F:ectoine synthase activity"/>
    <property type="evidence" value="ECO:0007669"/>
    <property type="project" value="UniProtKB-EC"/>
</dbReference>
<dbReference type="GO" id="GO:0019491">
    <property type="term" value="P:ectoine biosynthetic process"/>
    <property type="evidence" value="ECO:0007669"/>
    <property type="project" value="UniProtKB-UniRule"/>
</dbReference>
<dbReference type="CDD" id="cd06978">
    <property type="entry name" value="cupin_EctC"/>
    <property type="match status" value="1"/>
</dbReference>
<dbReference type="Gene3D" id="2.60.120.10">
    <property type="entry name" value="Jelly Rolls"/>
    <property type="match status" value="1"/>
</dbReference>
<dbReference type="HAMAP" id="MF_01255">
    <property type="entry name" value="Ectoine_synth"/>
    <property type="match status" value="1"/>
</dbReference>
<dbReference type="InterPro" id="IPR010462">
    <property type="entry name" value="Ectoine_synth"/>
</dbReference>
<dbReference type="InterPro" id="IPR014710">
    <property type="entry name" value="RmlC-like_jellyroll"/>
</dbReference>
<dbReference type="InterPro" id="IPR011051">
    <property type="entry name" value="RmlC_Cupin_sf"/>
</dbReference>
<dbReference type="NCBIfam" id="NF009806">
    <property type="entry name" value="PRK13290.1"/>
    <property type="match status" value="1"/>
</dbReference>
<dbReference type="PANTHER" id="PTHR39289">
    <property type="match status" value="1"/>
</dbReference>
<dbReference type="PANTHER" id="PTHR39289:SF1">
    <property type="entry name" value="L-ECTOINE SYNTHASE"/>
    <property type="match status" value="1"/>
</dbReference>
<dbReference type="Pfam" id="PF06339">
    <property type="entry name" value="Ectoine_synth"/>
    <property type="match status" value="1"/>
</dbReference>
<dbReference type="SUPFAM" id="SSF51182">
    <property type="entry name" value="RmlC-like cupins"/>
    <property type="match status" value="1"/>
</dbReference>
<feature type="chain" id="PRO_1000067238" description="L-ectoine synthase">
    <location>
        <begin position="1"/>
        <end position="135"/>
    </location>
</feature>
<comment type="function">
    <text evidence="1">Catalyzes the circularization of gamma-N-acetyl-alpha,gamma-diaminobutyric acid (ADABA) to ectoine (1,4,5,6-tetrahydro-2-methyl-4-pyrimidine carboxylic acid), which is an excellent osmoprotectant.</text>
</comment>
<comment type="catalytic activity">
    <reaction evidence="1">
        <text>(2S)-4-acetamido-2-aminobutanoate = L-ectoine + H2O</text>
        <dbReference type="Rhea" id="RHEA:17281"/>
        <dbReference type="ChEBI" id="CHEBI:15377"/>
        <dbReference type="ChEBI" id="CHEBI:58515"/>
        <dbReference type="ChEBI" id="CHEBI:58929"/>
        <dbReference type="EC" id="4.2.1.108"/>
    </reaction>
</comment>
<comment type="pathway">
    <text evidence="1">Amine and polyamine biosynthesis; ectoine biosynthesis; L-ectoine from L-aspartate 4-semialdehyde: step 3/3.</text>
</comment>
<comment type="similarity">
    <text evidence="1">Belongs to the ectoine synthase family.</text>
</comment>
<protein>
    <recommendedName>
        <fullName evidence="1">L-ectoine synthase</fullName>
        <ecNumber evidence="1">4.2.1.108</ecNumber>
    </recommendedName>
    <alternativeName>
        <fullName evidence="1">N-acetyldiaminobutyrate dehydratase</fullName>
    </alternativeName>
</protein>
<organism>
    <name type="scientific">Saccharopolyspora erythraea (strain ATCC 11635 / DSM 40517 / JCM 4748 / NBRC 13426 / NCIMB 8594 / NRRL 2338)</name>
    <dbReference type="NCBI Taxonomy" id="405948"/>
    <lineage>
        <taxon>Bacteria</taxon>
        <taxon>Bacillati</taxon>
        <taxon>Actinomycetota</taxon>
        <taxon>Actinomycetes</taxon>
        <taxon>Pseudonocardiales</taxon>
        <taxon>Pseudonocardiaceae</taxon>
        <taxon>Saccharopolyspora</taxon>
    </lineage>
</organism>
<gene>
    <name evidence="1" type="primary">ectC</name>
    <name type="ordered locus">SACE_0485</name>
</gene>
<keyword id="KW-0456">Lyase</keyword>
<keyword id="KW-1185">Reference proteome</keyword>
<proteinExistence type="inferred from homology"/>
<reference key="1">
    <citation type="journal article" date="2007" name="Nat. Biotechnol.">
        <title>Complete genome sequence of the erythromycin-producing bacterium Saccharopolyspora erythraea NRRL23338.</title>
        <authorList>
            <person name="Oliynyk M."/>
            <person name="Samborskyy M."/>
            <person name="Lester J.B."/>
            <person name="Mironenko T."/>
            <person name="Scott N."/>
            <person name="Dickens S."/>
            <person name="Haydock S.F."/>
            <person name="Leadlay P.F."/>
        </authorList>
    </citation>
    <scope>NUCLEOTIDE SEQUENCE [LARGE SCALE GENOMIC DNA]</scope>
    <source>
        <strain>ATCC 11635 / DSM 40517 / JCM 4748 / NBRC 13426 / NCIMB 8594 / NRRL 2338</strain>
    </source>
</reference>
<evidence type="ECO:0000255" key="1">
    <source>
        <dbReference type="HAMAP-Rule" id="MF_01255"/>
    </source>
</evidence>
<accession>A4F710</accession>
<sequence length="135" mass="15387">MIVRTLEEIEDTDADIKTENWRSKRIVLAREKVGFSVHETTLYAGTVNDFWYANHIEAVFVFEGEGEITDKATGETHQLKPGSLYLLNNHDKHQVRPKTDMRTVCVFNPPVTGREVHDENGVYPVIVEDEEEAAS</sequence>
<name>ECTC_SACEN</name>